<sequence length="519" mass="57962">MEGVLYKWTNYLSGWQPRWFLLCGGILSYYDSPEDAWKGCKGSIQMAVCEIQVHSVDNTRMDLIIPGEQYFYLKARSVAERQRWLVALGSAKACLTDSRTQKEKEFAENTENLKTKMSELRLYCDLLVQQVDKTKEVATAGVTDSEEGIDVGTLLKSTCNTFLKTLEECMQIANAAFTSELLYHTPPGSPQLAVLKSSKMKHPIIPIHNSLERSMELNSCENGSLSIEVNGDEEILMKTKSSLYLKSTEVDCSISSEENTDDNVTVQGEIMKEDGEENLESHDKDPAQPGSDSVCSPESPWEDNEEVIPTFFSTMNTSFSDIELLEDSGIPTEAFLASCYAVVPVLDKLGPTVFAPVKMDLVGNIKKVNQKYITNKEEFTTLQKIVLHEVEADVAQVRNSATEALLWLKRGLKFLKGFLTEVKNGEKDIQTALNNAYGKTLRQHHGWVVRGVFALALRAAPSYEDFVAALTIKEGDHQKEAFSAGMQRDLSLYLPAMEKQLAILDTLYEIHGLESDEVV</sequence>
<accession>Q80W71</accession>
<organism>
    <name type="scientific">Mus musculus</name>
    <name type="common">Mouse</name>
    <dbReference type="NCBI Taxonomy" id="10090"/>
    <lineage>
        <taxon>Eukaryota</taxon>
        <taxon>Metazoa</taxon>
        <taxon>Chordata</taxon>
        <taxon>Craniata</taxon>
        <taxon>Vertebrata</taxon>
        <taxon>Euteleostomi</taxon>
        <taxon>Mammalia</taxon>
        <taxon>Eutheria</taxon>
        <taxon>Euarchontoglires</taxon>
        <taxon>Glires</taxon>
        <taxon>Rodentia</taxon>
        <taxon>Myomorpha</taxon>
        <taxon>Muroidea</taxon>
        <taxon>Muridae</taxon>
        <taxon>Murinae</taxon>
        <taxon>Mus</taxon>
        <taxon>Mus</taxon>
    </lineage>
</organism>
<comment type="function">
    <text evidence="1">Cargo transport protein that is required for apical transport from the trans-Golgi network (TGN). Transports AQP2 from the trans-Golgi network (TGN) to sites of AQP2 phosphorylation. Mediates the non-vesicular transport of glucosylceramide (GlcCer) from the trans-Golgi network (TGN) to the plasma membrane and plays a pivotal role in the synthesis of complex glycosphingolipids. Binding of both phosphatidylinositol 4-phosphate (PIP) and ARF1 are essential for the GlcCer transfer ability. Also required for primary cilium formation, possibly by being involved in the transport of raft lipids to the apical membrane, and for membrane tubulation (By similarity).</text>
</comment>
<comment type="subunit">
    <text evidence="1">Homodimer. Interacts with ARF1; the interaction together with phosphatidylinositol 4-phosphate binding is required for FAPP2 GlcCer transfer ability.</text>
</comment>
<comment type="subcellular location">
    <subcellularLocation>
        <location evidence="3">Golgi apparatus</location>
        <location evidence="3">trans-Golgi network membrane</location>
    </subcellularLocation>
    <subcellularLocation>
        <location evidence="3">Membrane</location>
        <topology evidence="3">Peripheral membrane protein</topology>
    </subcellularLocation>
    <text evidence="3">Binds through its PH domain to PtdIns(4)P and ARF1, and subsequently localizes to TGN exit sites.</text>
</comment>
<comment type="alternative products">
    <event type="alternative splicing"/>
    <isoform>
        <id>Q80W71-1</id>
        <name>1</name>
        <sequence type="displayed"/>
    </isoform>
    <isoform>
        <id>Q80W71-2</id>
        <name>2</name>
        <sequence type="described" ref="VSP_028547"/>
    </isoform>
</comment>
<comment type="domain">
    <text evidence="1">The PH domain of FAPPS binds the small GTPase ARF1 and phosphatidylinositol-4-phosphate (PtdIns4P) with high selectivity, and is required for recruitment of FAPPs to the trans-Golgi network (TGN).</text>
</comment>
<evidence type="ECO:0000250" key="1"/>
<evidence type="ECO:0000250" key="2">
    <source>
        <dbReference type="UniProtKB" id="D3ZY60"/>
    </source>
</evidence>
<evidence type="ECO:0000250" key="3">
    <source>
        <dbReference type="UniProtKB" id="Q96JA3"/>
    </source>
</evidence>
<evidence type="ECO:0000255" key="4">
    <source>
        <dbReference type="PROSITE-ProRule" id="PRU00145"/>
    </source>
</evidence>
<evidence type="ECO:0000256" key="5">
    <source>
        <dbReference type="SAM" id="MobiDB-lite"/>
    </source>
</evidence>
<evidence type="ECO:0000303" key="6">
    <source>
    </source>
</evidence>
<reference key="1">
    <citation type="journal article" date="2009" name="PLoS Biol.">
        <title>Lineage-specific biology revealed by a finished genome assembly of the mouse.</title>
        <authorList>
            <person name="Church D.M."/>
            <person name="Goodstadt L."/>
            <person name="Hillier L.W."/>
            <person name="Zody M.C."/>
            <person name="Goldstein S."/>
            <person name="She X."/>
            <person name="Bult C.J."/>
            <person name="Agarwala R."/>
            <person name="Cherry J.L."/>
            <person name="DiCuccio M."/>
            <person name="Hlavina W."/>
            <person name="Kapustin Y."/>
            <person name="Meric P."/>
            <person name="Maglott D."/>
            <person name="Birtle Z."/>
            <person name="Marques A.C."/>
            <person name="Graves T."/>
            <person name="Zhou S."/>
            <person name="Teague B."/>
            <person name="Potamousis K."/>
            <person name="Churas C."/>
            <person name="Place M."/>
            <person name="Herschleb J."/>
            <person name="Runnheim R."/>
            <person name="Forrest D."/>
            <person name="Amos-Landgraf J."/>
            <person name="Schwartz D.C."/>
            <person name="Cheng Z."/>
            <person name="Lindblad-Toh K."/>
            <person name="Eichler E.E."/>
            <person name="Ponting C.P."/>
        </authorList>
    </citation>
    <scope>NUCLEOTIDE SEQUENCE [LARGE SCALE GENOMIC DNA]</scope>
    <source>
        <tissue>Testis</tissue>
    </source>
</reference>
<reference key="2">
    <citation type="journal article" date="2004" name="Genome Res.">
        <title>The status, quality, and expansion of the NIH full-length cDNA project: the Mammalian Gene Collection (MGC).</title>
        <authorList>
            <consortium name="The MGC Project Team"/>
        </authorList>
    </citation>
    <scope>NUCLEOTIDE SEQUENCE [LARGE SCALE MRNA] (ISOFORM 2)</scope>
    <source>
        <tissue>Testis</tissue>
    </source>
</reference>
<reference key="3">
    <citation type="journal article" date="2005" name="Science">
        <title>The transcriptional landscape of the mammalian genome.</title>
        <authorList>
            <person name="Carninci P."/>
            <person name="Kasukawa T."/>
            <person name="Katayama S."/>
            <person name="Gough J."/>
            <person name="Frith M.C."/>
            <person name="Maeda N."/>
            <person name="Oyama R."/>
            <person name="Ravasi T."/>
            <person name="Lenhard B."/>
            <person name="Wells C."/>
            <person name="Kodzius R."/>
            <person name="Shimokawa K."/>
            <person name="Bajic V.B."/>
            <person name="Brenner S.E."/>
            <person name="Batalov S."/>
            <person name="Forrest A.R."/>
            <person name="Zavolan M."/>
            <person name="Davis M.J."/>
            <person name="Wilming L.G."/>
            <person name="Aidinis V."/>
            <person name="Allen J.E."/>
            <person name="Ambesi-Impiombato A."/>
            <person name="Apweiler R."/>
            <person name="Aturaliya R.N."/>
            <person name="Bailey T.L."/>
            <person name="Bansal M."/>
            <person name="Baxter L."/>
            <person name="Beisel K.W."/>
            <person name="Bersano T."/>
            <person name="Bono H."/>
            <person name="Chalk A.M."/>
            <person name="Chiu K.P."/>
            <person name="Choudhary V."/>
            <person name="Christoffels A."/>
            <person name="Clutterbuck D.R."/>
            <person name="Crowe M.L."/>
            <person name="Dalla E."/>
            <person name="Dalrymple B.P."/>
            <person name="de Bono B."/>
            <person name="Della Gatta G."/>
            <person name="di Bernardo D."/>
            <person name="Down T."/>
            <person name="Engstrom P."/>
            <person name="Fagiolini M."/>
            <person name="Faulkner G."/>
            <person name="Fletcher C.F."/>
            <person name="Fukushima T."/>
            <person name="Furuno M."/>
            <person name="Futaki S."/>
            <person name="Gariboldi M."/>
            <person name="Georgii-Hemming P."/>
            <person name="Gingeras T.R."/>
            <person name="Gojobori T."/>
            <person name="Green R.E."/>
            <person name="Gustincich S."/>
            <person name="Harbers M."/>
            <person name="Hayashi Y."/>
            <person name="Hensch T.K."/>
            <person name="Hirokawa N."/>
            <person name="Hill D."/>
            <person name="Huminiecki L."/>
            <person name="Iacono M."/>
            <person name="Ikeo K."/>
            <person name="Iwama A."/>
            <person name="Ishikawa T."/>
            <person name="Jakt M."/>
            <person name="Kanapin A."/>
            <person name="Katoh M."/>
            <person name="Kawasawa Y."/>
            <person name="Kelso J."/>
            <person name="Kitamura H."/>
            <person name="Kitano H."/>
            <person name="Kollias G."/>
            <person name="Krishnan S.P."/>
            <person name="Kruger A."/>
            <person name="Kummerfeld S.K."/>
            <person name="Kurochkin I.V."/>
            <person name="Lareau L.F."/>
            <person name="Lazarevic D."/>
            <person name="Lipovich L."/>
            <person name="Liu J."/>
            <person name="Liuni S."/>
            <person name="McWilliam S."/>
            <person name="Madan Babu M."/>
            <person name="Madera M."/>
            <person name="Marchionni L."/>
            <person name="Matsuda H."/>
            <person name="Matsuzawa S."/>
            <person name="Miki H."/>
            <person name="Mignone F."/>
            <person name="Miyake S."/>
            <person name="Morris K."/>
            <person name="Mottagui-Tabar S."/>
            <person name="Mulder N."/>
            <person name="Nakano N."/>
            <person name="Nakauchi H."/>
            <person name="Ng P."/>
            <person name="Nilsson R."/>
            <person name="Nishiguchi S."/>
            <person name="Nishikawa S."/>
            <person name="Nori F."/>
            <person name="Ohara O."/>
            <person name="Okazaki Y."/>
            <person name="Orlando V."/>
            <person name="Pang K.C."/>
            <person name="Pavan W.J."/>
            <person name="Pavesi G."/>
            <person name="Pesole G."/>
            <person name="Petrovsky N."/>
            <person name="Piazza S."/>
            <person name="Reed J."/>
            <person name="Reid J.F."/>
            <person name="Ring B.Z."/>
            <person name="Ringwald M."/>
            <person name="Rost B."/>
            <person name="Ruan Y."/>
            <person name="Salzberg S.L."/>
            <person name="Sandelin A."/>
            <person name="Schneider C."/>
            <person name="Schoenbach C."/>
            <person name="Sekiguchi K."/>
            <person name="Semple C.A."/>
            <person name="Seno S."/>
            <person name="Sessa L."/>
            <person name="Sheng Y."/>
            <person name="Shibata Y."/>
            <person name="Shimada H."/>
            <person name="Shimada K."/>
            <person name="Silva D."/>
            <person name="Sinclair B."/>
            <person name="Sperling S."/>
            <person name="Stupka E."/>
            <person name="Sugiura K."/>
            <person name="Sultana R."/>
            <person name="Takenaka Y."/>
            <person name="Taki K."/>
            <person name="Tammoja K."/>
            <person name="Tan S.L."/>
            <person name="Tang S."/>
            <person name="Taylor M.S."/>
            <person name="Tegner J."/>
            <person name="Teichmann S.A."/>
            <person name="Ueda H.R."/>
            <person name="van Nimwegen E."/>
            <person name="Verardo R."/>
            <person name="Wei C.L."/>
            <person name="Yagi K."/>
            <person name="Yamanishi H."/>
            <person name="Zabarovsky E."/>
            <person name="Zhu S."/>
            <person name="Zimmer A."/>
            <person name="Hide W."/>
            <person name="Bult C."/>
            <person name="Grimmond S.M."/>
            <person name="Teasdale R.D."/>
            <person name="Liu E.T."/>
            <person name="Brusic V."/>
            <person name="Quackenbush J."/>
            <person name="Wahlestedt C."/>
            <person name="Mattick J.S."/>
            <person name="Hume D.A."/>
            <person name="Kai C."/>
            <person name="Sasaki D."/>
            <person name="Tomaru Y."/>
            <person name="Fukuda S."/>
            <person name="Kanamori-Katayama M."/>
            <person name="Suzuki M."/>
            <person name="Aoki J."/>
            <person name="Arakawa T."/>
            <person name="Iida J."/>
            <person name="Imamura K."/>
            <person name="Itoh M."/>
            <person name="Kato T."/>
            <person name="Kawaji H."/>
            <person name="Kawagashira N."/>
            <person name="Kawashima T."/>
            <person name="Kojima M."/>
            <person name="Kondo S."/>
            <person name="Konno H."/>
            <person name="Nakano K."/>
            <person name="Ninomiya N."/>
            <person name="Nishio T."/>
            <person name="Okada M."/>
            <person name="Plessy C."/>
            <person name="Shibata K."/>
            <person name="Shiraki T."/>
            <person name="Suzuki S."/>
            <person name="Tagami M."/>
            <person name="Waki K."/>
            <person name="Watahiki A."/>
            <person name="Okamura-Oho Y."/>
            <person name="Suzuki H."/>
            <person name="Kawai J."/>
            <person name="Hayashizaki Y."/>
        </authorList>
    </citation>
    <scope>NUCLEOTIDE SEQUENCE [LARGE SCALE MRNA] OF 1-158 (ISOFORM 1)</scope>
    <source>
        <tissue>Testis</tissue>
    </source>
</reference>
<reference key="4">
    <citation type="journal article" date="2010" name="Cell">
        <title>A tissue-specific atlas of mouse protein phosphorylation and expression.</title>
        <authorList>
            <person name="Huttlin E.L."/>
            <person name="Jedrychowski M.P."/>
            <person name="Elias J.E."/>
            <person name="Goswami T."/>
            <person name="Rad R."/>
            <person name="Beausoleil S.A."/>
            <person name="Villen J."/>
            <person name="Haas W."/>
            <person name="Sowa M.E."/>
            <person name="Gygi S.P."/>
        </authorList>
    </citation>
    <scope>IDENTIFICATION BY MASS SPECTROMETRY [LARGE SCALE ANALYSIS]</scope>
    <source>
        <tissue>Testis</tissue>
    </source>
</reference>
<name>PKHA8_MOUSE</name>
<proteinExistence type="evidence at protein level"/>
<dbReference type="EMBL" id="AC084800">
    <property type="status" value="NOT_ANNOTATED_CDS"/>
    <property type="molecule type" value="Genomic_DNA"/>
</dbReference>
<dbReference type="EMBL" id="BC052360">
    <property type="protein sequence ID" value="AAH52360.1"/>
    <property type="molecule type" value="mRNA"/>
</dbReference>
<dbReference type="EMBL" id="BB865855">
    <property type="status" value="NOT_ANNOTATED_CDS"/>
    <property type="molecule type" value="mRNA"/>
</dbReference>
<dbReference type="CCDS" id="CCDS39491.1">
    <molecule id="Q80W71-2"/>
</dbReference>
<dbReference type="CCDS" id="CCDS51781.1">
    <molecule id="Q80W71-1"/>
</dbReference>
<dbReference type="RefSeq" id="NP_001001335.1">
    <molecule id="Q80W71-2"/>
    <property type="nucleotide sequence ID" value="NM_001001335.2"/>
</dbReference>
<dbReference type="RefSeq" id="NP_001157833.1">
    <molecule id="Q80W71-1"/>
    <property type="nucleotide sequence ID" value="NM_001164361.1"/>
</dbReference>
<dbReference type="SMR" id="Q80W71"/>
<dbReference type="BioGRID" id="231207">
    <property type="interactions" value="1"/>
</dbReference>
<dbReference type="FunCoup" id="Q80W71">
    <property type="interactions" value="3700"/>
</dbReference>
<dbReference type="STRING" id="10090.ENSMUSP00000112466"/>
<dbReference type="iPTMnet" id="Q80W71"/>
<dbReference type="PhosphoSitePlus" id="Q80W71"/>
<dbReference type="PaxDb" id="10090-ENSMUSP00000112466"/>
<dbReference type="ProteomicsDB" id="289908">
    <molecule id="Q80W71-1"/>
</dbReference>
<dbReference type="ProteomicsDB" id="289909">
    <molecule id="Q80W71-2"/>
</dbReference>
<dbReference type="Antibodypedia" id="26151">
    <property type="antibodies" value="166 antibodies from 28 providers"/>
</dbReference>
<dbReference type="DNASU" id="231999"/>
<dbReference type="Ensembl" id="ENSMUST00000101385.3">
    <molecule id="Q80W71-2"/>
    <property type="protein sequence ID" value="ENSMUSP00000098935.3"/>
    <property type="gene ID" value="ENSMUSG00000005225.16"/>
</dbReference>
<dbReference type="Ensembl" id="ENSMUST00000119706.8">
    <molecule id="Q80W71-1"/>
    <property type="protein sequence ID" value="ENSMUSP00000112466.2"/>
    <property type="gene ID" value="ENSMUSG00000005225.16"/>
</dbReference>
<dbReference type="GeneID" id="231999"/>
<dbReference type="KEGG" id="mmu:231999"/>
<dbReference type="UCSC" id="uc009cab.2">
    <molecule id="Q80W71-1"/>
    <property type="organism name" value="mouse"/>
</dbReference>
<dbReference type="AGR" id="MGI:2681164"/>
<dbReference type="CTD" id="84725"/>
<dbReference type="MGI" id="MGI:2681164">
    <property type="gene designation" value="Plekha8"/>
</dbReference>
<dbReference type="VEuPathDB" id="HostDB:ENSMUSG00000005225"/>
<dbReference type="eggNOG" id="KOG3221">
    <property type="taxonomic scope" value="Eukaryota"/>
</dbReference>
<dbReference type="GeneTree" id="ENSGT00940000157288"/>
<dbReference type="HOGENOM" id="CLU_039839_0_0_1"/>
<dbReference type="InParanoid" id="Q80W71"/>
<dbReference type="OMA" id="ERQMEMN"/>
<dbReference type="OrthoDB" id="1854502at2759"/>
<dbReference type="PhylomeDB" id="Q80W71"/>
<dbReference type="TreeFam" id="TF317467"/>
<dbReference type="Reactome" id="R-MMU-1660499">
    <property type="pathway name" value="Synthesis of PIPs at the plasma membrane"/>
</dbReference>
<dbReference type="Reactome" id="R-MMU-9845576">
    <property type="pathway name" value="Glycosphingolipid transport"/>
</dbReference>
<dbReference type="BioGRID-ORCS" id="231999">
    <property type="hits" value="1 hit in 78 CRISPR screens"/>
</dbReference>
<dbReference type="ChiTaRS" id="Plekha8">
    <property type="organism name" value="mouse"/>
</dbReference>
<dbReference type="PRO" id="PR:Q80W71"/>
<dbReference type="Proteomes" id="UP000000589">
    <property type="component" value="Chromosome 6"/>
</dbReference>
<dbReference type="RNAct" id="Q80W71">
    <property type="molecule type" value="protein"/>
</dbReference>
<dbReference type="Bgee" id="ENSMUSG00000005225">
    <property type="expression patterns" value="Expressed in manus and 223 other cell types or tissues"/>
</dbReference>
<dbReference type="GO" id="GO:0016020">
    <property type="term" value="C:membrane"/>
    <property type="evidence" value="ECO:0007669"/>
    <property type="project" value="UniProtKB-SubCell"/>
</dbReference>
<dbReference type="GO" id="GO:0005654">
    <property type="term" value="C:nucleoplasm"/>
    <property type="evidence" value="ECO:0007669"/>
    <property type="project" value="Ensembl"/>
</dbReference>
<dbReference type="GO" id="GO:0005802">
    <property type="term" value="C:trans-Golgi network"/>
    <property type="evidence" value="ECO:0000250"/>
    <property type="project" value="UniProtKB"/>
</dbReference>
<dbReference type="GO" id="GO:0097001">
    <property type="term" value="F:ceramide binding"/>
    <property type="evidence" value="ECO:0000250"/>
    <property type="project" value="UniProtKB"/>
</dbReference>
<dbReference type="GO" id="GO:0051861">
    <property type="term" value="F:glycolipid binding"/>
    <property type="evidence" value="ECO:0000250"/>
    <property type="project" value="UniProtKB"/>
</dbReference>
<dbReference type="GO" id="GO:0017089">
    <property type="term" value="F:glycolipid transfer activity"/>
    <property type="evidence" value="ECO:0000250"/>
    <property type="project" value="UniProtKB"/>
</dbReference>
<dbReference type="GO" id="GO:0070273">
    <property type="term" value="F:phosphatidylinositol-4-phosphate binding"/>
    <property type="evidence" value="ECO:0000250"/>
    <property type="project" value="UniProtKB"/>
</dbReference>
<dbReference type="GO" id="GO:0035621">
    <property type="term" value="P:ER to Golgi ceramide transport"/>
    <property type="evidence" value="ECO:0000250"/>
    <property type="project" value="UniProtKB"/>
</dbReference>
<dbReference type="GO" id="GO:0006869">
    <property type="term" value="P:lipid transport"/>
    <property type="evidence" value="ECO:0000250"/>
    <property type="project" value="UniProtKB"/>
</dbReference>
<dbReference type="CDD" id="cd01247">
    <property type="entry name" value="PH_FAPP1_FAPP2"/>
    <property type="match status" value="1"/>
</dbReference>
<dbReference type="FunFam" id="1.10.3520.10:FF:000001">
    <property type="entry name" value="Pleckstrin domain-containing family A member 8"/>
    <property type="match status" value="1"/>
</dbReference>
<dbReference type="FunFam" id="2.30.29.30:FF:000085">
    <property type="entry name" value="Pleckstrin homology domain-containing family A member 8"/>
    <property type="match status" value="1"/>
</dbReference>
<dbReference type="Gene3D" id="1.10.3520.10">
    <property type="entry name" value="Glycolipid transfer protein"/>
    <property type="match status" value="1"/>
</dbReference>
<dbReference type="Gene3D" id="2.30.29.30">
    <property type="entry name" value="Pleckstrin-homology domain (PH domain)/Phosphotyrosine-binding domain (PTB)"/>
    <property type="match status" value="1"/>
</dbReference>
<dbReference type="InterPro" id="IPR036497">
    <property type="entry name" value="GLTP_sf"/>
</dbReference>
<dbReference type="InterPro" id="IPR014830">
    <property type="entry name" value="Glycolipid_transfer_prot_dom"/>
</dbReference>
<dbReference type="InterPro" id="IPR011993">
    <property type="entry name" value="PH-like_dom_sf"/>
</dbReference>
<dbReference type="InterPro" id="IPR001849">
    <property type="entry name" value="PH_domain"/>
</dbReference>
<dbReference type="PANTHER" id="PTHR10219">
    <property type="entry name" value="GLYCOLIPID TRANSFER PROTEIN-RELATED"/>
    <property type="match status" value="1"/>
</dbReference>
<dbReference type="PANTHER" id="PTHR10219:SF25">
    <property type="entry name" value="PLECKSTRIN HOMOLOGY DOMAIN-CONTAINING FAMILY A MEMBER 8"/>
    <property type="match status" value="1"/>
</dbReference>
<dbReference type="Pfam" id="PF08718">
    <property type="entry name" value="GLTP"/>
    <property type="match status" value="1"/>
</dbReference>
<dbReference type="Pfam" id="PF00169">
    <property type="entry name" value="PH"/>
    <property type="match status" value="1"/>
</dbReference>
<dbReference type="SMART" id="SM00233">
    <property type="entry name" value="PH"/>
    <property type="match status" value="1"/>
</dbReference>
<dbReference type="SUPFAM" id="SSF110004">
    <property type="entry name" value="Glycolipid transfer protein, GLTP"/>
    <property type="match status" value="1"/>
</dbReference>
<dbReference type="SUPFAM" id="SSF50729">
    <property type="entry name" value="PH domain-like"/>
    <property type="match status" value="1"/>
</dbReference>
<dbReference type="PROSITE" id="PS50003">
    <property type="entry name" value="PH_DOMAIN"/>
    <property type="match status" value="1"/>
</dbReference>
<keyword id="KW-0025">Alternative splicing</keyword>
<keyword id="KW-0333">Golgi apparatus</keyword>
<keyword id="KW-0445">Lipid transport</keyword>
<keyword id="KW-0446">Lipid-binding</keyword>
<keyword id="KW-0472">Membrane</keyword>
<keyword id="KW-0597">Phosphoprotein</keyword>
<keyword id="KW-1185">Reference proteome</keyword>
<keyword id="KW-0813">Transport</keyword>
<protein>
    <recommendedName>
        <fullName>Pleckstrin homology domain-containing family A member 8</fullName>
        <shortName>PH domain-containing family A member 8</shortName>
    </recommendedName>
    <alternativeName>
        <fullName>Phosphatidylinositol-four-phosphate adapter protein 2</fullName>
        <shortName>FAPP-2</shortName>
        <shortName>Phosphoinositol 4-phosphate adapter protein 2</shortName>
    </alternativeName>
</protein>
<gene>
    <name type="primary">Plekha8</name>
    <name type="synonym">Fapp2</name>
</gene>
<feature type="chain" id="PRO_0000306866" description="Pleckstrin homology domain-containing family A member 8">
    <location>
        <begin position="1"/>
        <end position="519"/>
    </location>
</feature>
<feature type="domain" description="PH" evidence="4">
    <location>
        <begin position="1"/>
        <end position="93"/>
    </location>
</feature>
<feature type="region of interest" description="Disordered" evidence="5">
    <location>
        <begin position="275"/>
        <end position="302"/>
    </location>
</feature>
<feature type="region of interest" description="Glycolipid transfer protein homology domain">
    <location>
        <begin position="330"/>
        <end position="473"/>
    </location>
</feature>
<feature type="modified residue" description="Phosphothreonine" evidence="2">
    <location>
        <position position="139"/>
    </location>
</feature>
<feature type="modified residue" description="Phosphoserine" evidence="2">
    <location>
        <position position="145"/>
    </location>
</feature>
<feature type="modified residue" description="Phosphothreonine" evidence="2">
    <location>
        <position position="153"/>
    </location>
</feature>
<feature type="splice variant" id="VSP_028547" description="In isoform 2." evidence="6">
    <location>
        <begin position="1"/>
        <end position="45"/>
    </location>
</feature>